<feature type="chain" id="PRO_0000313997" description="tRNA U34 carboxymethyltransferase">
    <location>
        <begin position="1"/>
        <end position="323"/>
    </location>
</feature>
<feature type="binding site" evidence="1">
    <location>
        <position position="91"/>
    </location>
    <ligand>
        <name>carboxy-S-adenosyl-L-methionine</name>
        <dbReference type="ChEBI" id="CHEBI:134278"/>
    </ligand>
</feature>
<feature type="binding site" evidence="1">
    <location>
        <position position="105"/>
    </location>
    <ligand>
        <name>carboxy-S-adenosyl-L-methionine</name>
        <dbReference type="ChEBI" id="CHEBI:134278"/>
    </ligand>
</feature>
<feature type="binding site" evidence="1">
    <location>
        <position position="110"/>
    </location>
    <ligand>
        <name>carboxy-S-adenosyl-L-methionine</name>
        <dbReference type="ChEBI" id="CHEBI:134278"/>
    </ligand>
</feature>
<feature type="binding site" evidence="1">
    <location>
        <position position="130"/>
    </location>
    <ligand>
        <name>carboxy-S-adenosyl-L-methionine</name>
        <dbReference type="ChEBI" id="CHEBI:134278"/>
    </ligand>
</feature>
<feature type="binding site" evidence="1">
    <location>
        <begin position="181"/>
        <end position="182"/>
    </location>
    <ligand>
        <name>carboxy-S-adenosyl-L-methionine</name>
        <dbReference type="ChEBI" id="CHEBI:134278"/>
    </ligand>
</feature>
<feature type="binding site" evidence="1">
    <location>
        <position position="196"/>
    </location>
    <ligand>
        <name>carboxy-S-adenosyl-L-methionine</name>
        <dbReference type="ChEBI" id="CHEBI:134278"/>
    </ligand>
</feature>
<feature type="binding site" evidence="1">
    <location>
        <position position="200"/>
    </location>
    <ligand>
        <name>carboxy-S-adenosyl-L-methionine</name>
        <dbReference type="ChEBI" id="CHEBI:134278"/>
    </ligand>
</feature>
<feature type="binding site" evidence="1">
    <location>
        <position position="315"/>
    </location>
    <ligand>
        <name>carboxy-S-adenosyl-L-methionine</name>
        <dbReference type="ChEBI" id="CHEBI:134278"/>
    </ligand>
</feature>
<accession>Q66AU8</accession>
<gene>
    <name evidence="1" type="primary">cmoB</name>
    <name type="ordered locus">YPTB2032</name>
</gene>
<keyword id="KW-0808">Transferase</keyword>
<keyword id="KW-0819">tRNA processing</keyword>
<reference key="1">
    <citation type="journal article" date="2004" name="Proc. Natl. Acad. Sci. U.S.A.">
        <title>Insights into the evolution of Yersinia pestis through whole-genome comparison with Yersinia pseudotuberculosis.</title>
        <authorList>
            <person name="Chain P.S.G."/>
            <person name="Carniel E."/>
            <person name="Larimer F.W."/>
            <person name="Lamerdin J."/>
            <person name="Stoutland P.O."/>
            <person name="Regala W.M."/>
            <person name="Georgescu A.M."/>
            <person name="Vergez L.M."/>
            <person name="Land M.L."/>
            <person name="Motin V.L."/>
            <person name="Brubaker R.R."/>
            <person name="Fowler J."/>
            <person name="Hinnebusch J."/>
            <person name="Marceau M."/>
            <person name="Medigue C."/>
            <person name="Simonet M."/>
            <person name="Chenal-Francisque V."/>
            <person name="Souza B."/>
            <person name="Dacheux D."/>
            <person name="Elliott J.M."/>
            <person name="Derbise A."/>
            <person name="Hauser L.J."/>
            <person name="Garcia E."/>
        </authorList>
    </citation>
    <scope>NUCLEOTIDE SEQUENCE [LARGE SCALE GENOMIC DNA]</scope>
    <source>
        <strain>IP32953</strain>
    </source>
</reference>
<evidence type="ECO:0000255" key="1">
    <source>
        <dbReference type="HAMAP-Rule" id="MF_01590"/>
    </source>
</evidence>
<name>CMOB_YERPS</name>
<proteinExistence type="inferred from homology"/>
<organism>
    <name type="scientific">Yersinia pseudotuberculosis serotype I (strain IP32953)</name>
    <dbReference type="NCBI Taxonomy" id="273123"/>
    <lineage>
        <taxon>Bacteria</taxon>
        <taxon>Pseudomonadati</taxon>
        <taxon>Pseudomonadota</taxon>
        <taxon>Gammaproteobacteria</taxon>
        <taxon>Enterobacterales</taxon>
        <taxon>Yersiniaceae</taxon>
        <taxon>Yersinia</taxon>
    </lineage>
</organism>
<protein>
    <recommendedName>
        <fullName evidence="1">tRNA U34 carboxymethyltransferase</fullName>
        <ecNumber evidence="1">2.5.1.-</ecNumber>
    </recommendedName>
</protein>
<dbReference type="EC" id="2.5.1.-" evidence="1"/>
<dbReference type="EMBL" id="BX936398">
    <property type="protein sequence ID" value="CAH21270.1"/>
    <property type="molecule type" value="Genomic_DNA"/>
</dbReference>
<dbReference type="RefSeq" id="WP_011192411.1">
    <property type="nucleotide sequence ID" value="NC_006155.1"/>
</dbReference>
<dbReference type="SMR" id="Q66AU8"/>
<dbReference type="GeneID" id="49785978"/>
<dbReference type="KEGG" id="ypo:BZ17_433"/>
<dbReference type="KEGG" id="yps:YPTB2032"/>
<dbReference type="PATRIC" id="fig|273123.14.peg.462"/>
<dbReference type="Proteomes" id="UP000001011">
    <property type="component" value="Chromosome"/>
</dbReference>
<dbReference type="GO" id="GO:0008168">
    <property type="term" value="F:methyltransferase activity"/>
    <property type="evidence" value="ECO:0007669"/>
    <property type="project" value="TreeGrafter"/>
</dbReference>
<dbReference type="GO" id="GO:0016765">
    <property type="term" value="F:transferase activity, transferring alkyl or aryl (other than methyl) groups"/>
    <property type="evidence" value="ECO:0007669"/>
    <property type="project" value="UniProtKB-UniRule"/>
</dbReference>
<dbReference type="GO" id="GO:0002098">
    <property type="term" value="P:tRNA wobble uridine modification"/>
    <property type="evidence" value="ECO:0007669"/>
    <property type="project" value="InterPro"/>
</dbReference>
<dbReference type="CDD" id="cd02440">
    <property type="entry name" value="AdoMet_MTases"/>
    <property type="match status" value="1"/>
</dbReference>
<dbReference type="Gene3D" id="3.40.50.150">
    <property type="entry name" value="Vaccinia Virus protein VP39"/>
    <property type="match status" value="1"/>
</dbReference>
<dbReference type="HAMAP" id="MF_01590">
    <property type="entry name" value="tRNA_carboxymethyltr_CmoB"/>
    <property type="match status" value="1"/>
</dbReference>
<dbReference type="InterPro" id="IPR010017">
    <property type="entry name" value="CmoB"/>
</dbReference>
<dbReference type="InterPro" id="IPR027555">
    <property type="entry name" value="Mo5U34_MeTrfas-like"/>
</dbReference>
<dbReference type="InterPro" id="IPR029063">
    <property type="entry name" value="SAM-dependent_MTases_sf"/>
</dbReference>
<dbReference type="NCBIfam" id="NF011650">
    <property type="entry name" value="PRK15068.1"/>
    <property type="match status" value="1"/>
</dbReference>
<dbReference type="NCBIfam" id="TIGR00452">
    <property type="entry name" value="tRNA 5-methoxyuridine(34)/uridine 5-oxyacetic acid(34) synthase CmoB"/>
    <property type="match status" value="1"/>
</dbReference>
<dbReference type="PANTHER" id="PTHR43464">
    <property type="entry name" value="METHYLTRANSFERASE"/>
    <property type="match status" value="1"/>
</dbReference>
<dbReference type="PANTHER" id="PTHR43464:SF95">
    <property type="entry name" value="TRNA U34 CARBOXYMETHYLTRANSFERASE"/>
    <property type="match status" value="1"/>
</dbReference>
<dbReference type="Pfam" id="PF08003">
    <property type="entry name" value="Methyltransf_9"/>
    <property type="match status" value="1"/>
</dbReference>
<dbReference type="SUPFAM" id="SSF53335">
    <property type="entry name" value="S-adenosyl-L-methionine-dependent methyltransferases"/>
    <property type="match status" value="1"/>
</dbReference>
<comment type="function">
    <text evidence="1">Catalyzes carboxymethyl transfer from carboxy-S-adenosyl-L-methionine (Cx-SAM) to 5-hydroxyuridine (ho5U) to form 5-carboxymethoxyuridine (cmo5U) at position 34 in tRNAs.</text>
</comment>
<comment type="catalytic activity">
    <reaction evidence="1">
        <text>carboxy-S-adenosyl-L-methionine + 5-hydroxyuridine(34) in tRNA = 5-carboxymethoxyuridine(34) in tRNA + S-adenosyl-L-homocysteine + H(+)</text>
        <dbReference type="Rhea" id="RHEA:52848"/>
        <dbReference type="Rhea" id="RHEA-COMP:13381"/>
        <dbReference type="Rhea" id="RHEA-COMP:13383"/>
        <dbReference type="ChEBI" id="CHEBI:15378"/>
        <dbReference type="ChEBI" id="CHEBI:57856"/>
        <dbReference type="ChEBI" id="CHEBI:134278"/>
        <dbReference type="ChEBI" id="CHEBI:136877"/>
        <dbReference type="ChEBI" id="CHEBI:136879"/>
    </reaction>
</comment>
<comment type="subunit">
    <text evidence="1">Homotetramer.</text>
</comment>
<comment type="similarity">
    <text evidence="1">Belongs to the class I-like SAM-binding methyltransferase superfamily. CmoB family.</text>
</comment>
<sequence length="323" mass="36592">MIEFGDFYRLIAKGPLSPWLDILPAQLSAWQRESLHGKFKTWFNAVEHLPQLTPTTLDLHSGVRAEMSPPISAGQREGMENMLRALMPWRKGPFSLYGLEIDTEWRSDWKWQRVLPHISPLAGRTILDVGCGSGYHLWRMIGEGAHLAVGIDPMQLFLCQFEAIRKLLGGDQRAHVLPLGIEQLPELAAFDTVFSMGVLYHRRSPLDHLYQLKNQLVTDGELVLETLVVEGDSQQVLVPGDRYAQMRNVYFIPSAPALKAWLEKCGFVDVRIADMAVTTTEEQRRTDWMTSESLAEFLDPHDHSKTVEGYPAPLRAVLIARKP</sequence>